<feature type="chain" id="PRO_1000185837" description="6-phosphogluconolactonase">
    <location>
        <begin position="1"/>
        <end position="331"/>
    </location>
</feature>
<feature type="modified residue" description="N6-acetyllysine" evidence="1">
    <location>
        <position position="287"/>
    </location>
</feature>
<sequence length="331" mass="36293">MKQTVYIASPESQQIHVWNLNHEGALTLTQVVDVPGQVQPMVVSPDKRYLYVGVRPEFRVLAYRIAPDDGALTFAAESALPGSPTHISTDHLGQFVFVGSYNAGNVSVTRLEDGLPVGVVDVVEGLDGCHSANISPDNRTLWVPALKQDRICLFTVSDDGHLVAQDPAEVTTVEGAGPRHMVFHPNEQYAYCVNELNSSVDVWELKDPHGNIECVQTLDMMPENFSDTRWAADIHITPDGRHLYACDRTASLITVFSVSEDGSVLSKEGFQPTETQPRGFNVDHSGKYLIAAGQKSHHISVYEIVGEQGLLHEKGRYAVGQGPMWVVVNAH</sequence>
<proteinExistence type="inferred from homology"/>
<dbReference type="EC" id="3.1.1.31" evidence="1"/>
<dbReference type="EMBL" id="CU928162">
    <property type="protein sequence ID" value="CAR06934.1"/>
    <property type="molecule type" value="Genomic_DNA"/>
</dbReference>
<dbReference type="RefSeq" id="WP_000815414.1">
    <property type="nucleotide sequence ID" value="NC_011745.1"/>
</dbReference>
<dbReference type="SMR" id="B7MPQ2"/>
<dbReference type="KEGG" id="ecq:ECED1_0729"/>
<dbReference type="HOGENOM" id="CLU_038716_2_0_6"/>
<dbReference type="UniPathway" id="UPA00115">
    <property type="reaction ID" value="UER00409"/>
</dbReference>
<dbReference type="Proteomes" id="UP000000748">
    <property type="component" value="Chromosome"/>
</dbReference>
<dbReference type="GO" id="GO:0005829">
    <property type="term" value="C:cytosol"/>
    <property type="evidence" value="ECO:0007669"/>
    <property type="project" value="TreeGrafter"/>
</dbReference>
<dbReference type="GO" id="GO:0017057">
    <property type="term" value="F:6-phosphogluconolactonase activity"/>
    <property type="evidence" value="ECO:0007669"/>
    <property type="project" value="UniProtKB-UniRule"/>
</dbReference>
<dbReference type="GO" id="GO:0006006">
    <property type="term" value="P:glucose metabolic process"/>
    <property type="evidence" value="ECO:0007669"/>
    <property type="project" value="UniProtKB-KW"/>
</dbReference>
<dbReference type="GO" id="GO:0009051">
    <property type="term" value="P:pentose-phosphate shunt, oxidative branch"/>
    <property type="evidence" value="ECO:0007669"/>
    <property type="project" value="UniProtKB-UniRule"/>
</dbReference>
<dbReference type="FunFam" id="2.130.10.10:FF:000051">
    <property type="entry name" value="6-phosphogluconolactonase"/>
    <property type="match status" value="1"/>
</dbReference>
<dbReference type="Gene3D" id="2.130.10.10">
    <property type="entry name" value="YVTN repeat-like/Quinoprotein amine dehydrogenase"/>
    <property type="match status" value="1"/>
</dbReference>
<dbReference type="HAMAP" id="MF_01605">
    <property type="entry name" value="6P_gluconolactonase"/>
    <property type="match status" value="1"/>
</dbReference>
<dbReference type="InterPro" id="IPR022528">
    <property type="entry name" value="6-phosphogluconolactonase_YbhE"/>
</dbReference>
<dbReference type="InterPro" id="IPR050282">
    <property type="entry name" value="Cycloisomerase_2"/>
</dbReference>
<dbReference type="InterPro" id="IPR019405">
    <property type="entry name" value="Lactonase_7-beta_prop"/>
</dbReference>
<dbReference type="InterPro" id="IPR011045">
    <property type="entry name" value="N2O_reductase_N"/>
</dbReference>
<dbReference type="InterPro" id="IPR015943">
    <property type="entry name" value="WD40/YVTN_repeat-like_dom_sf"/>
</dbReference>
<dbReference type="NCBIfam" id="NF008258">
    <property type="entry name" value="PRK11028.1"/>
    <property type="match status" value="1"/>
</dbReference>
<dbReference type="PANTHER" id="PTHR30344:SF1">
    <property type="entry name" value="6-PHOSPHOGLUCONOLACTONASE"/>
    <property type="match status" value="1"/>
</dbReference>
<dbReference type="PANTHER" id="PTHR30344">
    <property type="entry name" value="6-PHOSPHOGLUCONOLACTONASE-RELATED"/>
    <property type="match status" value="1"/>
</dbReference>
<dbReference type="Pfam" id="PF10282">
    <property type="entry name" value="Lactonase"/>
    <property type="match status" value="1"/>
</dbReference>
<dbReference type="SUPFAM" id="SSF50974">
    <property type="entry name" value="Nitrous oxide reductase, N-terminal domain"/>
    <property type="match status" value="1"/>
</dbReference>
<gene>
    <name evidence="1" type="primary">pgl</name>
    <name type="ordered locus">ECED1_0729</name>
</gene>
<protein>
    <recommendedName>
        <fullName evidence="1">6-phosphogluconolactonase</fullName>
        <shortName evidence="1">6-P-gluconolactonase</shortName>
        <ecNumber evidence="1">3.1.1.31</ecNumber>
    </recommendedName>
</protein>
<name>6PGL_ECO81</name>
<evidence type="ECO:0000255" key="1">
    <source>
        <dbReference type="HAMAP-Rule" id="MF_01605"/>
    </source>
</evidence>
<accession>B7MPQ2</accession>
<reference key="1">
    <citation type="journal article" date="2009" name="PLoS Genet.">
        <title>Organised genome dynamics in the Escherichia coli species results in highly diverse adaptive paths.</title>
        <authorList>
            <person name="Touchon M."/>
            <person name="Hoede C."/>
            <person name="Tenaillon O."/>
            <person name="Barbe V."/>
            <person name="Baeriswyl S."/>
            <person name="Bidet P."/>
            <person name="Bingen E."/>
            <person name="Bonacorsi S."/>
            <person name="Bouchier C."/>
            <person name="Bouvet O."/>
            <person name="Calteau A."/>
            <person name="Chiapello H."/>
            <person name="Clermont O."/>
            <person name="Cruveiller S."/>
            <person name="Danchin A."/>
            <person name="Diard M."/>
            <person name="Dossat C."/>
            <person name="Karoui M.E."/>
            <person name="Frapy E."/>
            <person name="Garry L."/>
            <person name="Ghigo J.M."/>
            <person name="Gilles A.M."/>
            <person name="Johnson J."/>
            <person name="Le Bouguenec C."/>
            <person name="Lescat M."/>
            <person name="Mangenot S."/>
            <person name="Martinez-Jehanne V."/>
            <person name="Matic I."/>
            <person name="Nassif X."/>
            <person name="Oztas S."/>
            <person name="Petit M.A."/>
            <person name="Pichon C."/>
            <person name="Rouy Z."/>
            <person name="Ruf C.S."/>
            <person name="Schneider D."/>
            <person name="Tourret J."/>
            <person name="Vacherie B."/>
            <person name="Vallenet D."/>
            <person name="Medigue C."/>
            <person name="Rocha E.P.C."/>
            <person name="Denamur E."/>
        </authorList>
    </citation>
    <scope>NUCLEOTIDE SEQUENCE [LARGE SCALE GENOMIC DNA]</scope>
    <source>
        <strain>ED1a</strain>
    </source>
</reference>
<keyword id="KW-0007">Acetylation</keyword>
<keyword id="KW-0119">Carbohydrate metabolism</keyword>
<keyword id="KW-0313">Glucose metabolism</keyword>
<keyword id="KW-0378">Hydrolase</keyword>
<comment type="function">
    <text evidence="1">Catalyzes the hydrolysis of 6-phosphogluconolactone to 6-phosphogluconate.</text>
</comment>
<comment type="catalytic activity">
    <reaction evidence="1">
        <text>6-phospho-D-glucono-1,5-lactone + H2O = 6-phospho-D-gluconate + H(+)</text>
        <dbReference type="Rhea" id="RHEA:12556"/>
        <dbReference type="ChEBI" id="CHEBI:15377"/>
        <dbReference type="ChEBI" id="CHEBI:15378"/>
        <dbReference type="ChEBI" id="CHEBI:57955"/>
        <dbReference type="ChEBI" id="CHEBI:58759"/>
        <dbReference type="EC" id="3.1.1.31"/>
    </reaction>
</comment>
<comment type="pathway">
    <text evidence="1">Carbohydrate degradation; pentose phosphate pathway; D-ribulose 5-phosphate from D-glucose 6-phosphate (oxidative stage): step 2/3.</text>
</comment>
<comment type="similarity">
    <text evidence="1">Belongs to the cycloisomerase 2 family.</text>
</comment>
<organism>
    <name type="scientific">Escherichia coli O81 (strain ED1a)</name>
    <dbReference type="NCBI Taxonomy" id="585397"/>
    <lineage>
        <taxon>Bacteria</taxon>
        <taxon>Pseudomonadati</taxon>
        <taxon>Pseudomonadota</taxon>
        <taxon>Gammaproteobacteria</taxon>
        <taxon>Enterobacterales</taxon>
        <taxon>Enterobacteriaceae</taxon>
        <taxon>Escherichia</taxon>
    </lineage>
</organism>